<protein>
    <recommendedName>
        <fullName>Transmembrane protein 61</fullName>
    </recommendedName>
</protein>
<gene>
    <name type="primary">TMEM61</name>
</gene>
<name>TMM61_HUMAN</name>
<sequence length="210" mass="22170">MALPQMCDGSHLASTLRYCMTVSGTVVLVAGTLCFAWWSEGDATAQPGQLAPPTEYPVPEGPSPLLRSVSFVCCGAGGLLLLIGLLWSVKASIPGPPRWDPYHLSRDLYYLTVESSEKESCRTPKVVDIPTYEEAVSFPVAEGPPTPPAYPTEEALEPSGSRDALLSTQPAWPPPSYESISLALDAVSAETTPSATRSCSGLVQTARGGS</sequence>
<evidence type="ECO:0000255" key="1"/>
<evidence type="ECO:0000256" key="2">
    <source>
        <dbReference type="SAM" id="MobiDB-lite"/>
    </source>
</evidence>
<evidence type="ECO:0000305" key="3"/>
<feature type="chain" id="PRO_0000254130" description="Transmembrane protein 61">
    <location>
        <begin position="1"/>
        <end position="210"/>
    </location>
</feature>
<feature type="transmembrane region" description="Helical" evidence="1">
    <location>
        <begin position="18"/>
        <end position="38"/>
    </location>
</feature>
<feature type="transmembrane region" description="Helical" evidence="1">
    <location>
        <begin position="69"/>
        <end position="89"/>
    </location>
</feature>
<feature type="region of interest" description="Disordered" evidence="2">
    <location>
        <begin position="140"/>
        <end position="172"/>
    </location>
</feature>
<feature type="sequence variant" id="VAR_028820" description="In dbSNP:rs3737832.">
    <original>E</original>
    <variation>K</variation>
    <location>
        <position position="40"/>
    </location>
</feature>
<reference key="1">
    <citation type="journal article" date="2006" name="Nature">
        <title>The DNA sequence and biological annotation of human chromosome 1.</title>
        <authorList>
            <person name="Gregory S.G."/>
            <person name="Barlow K.F."/>
            <person name="McLay K.E."/>
            <person name="Kaul R."/>
            <person name="Swarbreck D."/>
            <person name="Dunham A."/>
            <person name="Scott C.E."/>
            <person name="Howe K.L."/>
            <person name="Woodfine K."/>
            <person name="Spencer C.C.A."/>
            <person name="Jones M.C."/>
            <person name="Gillson C."/>
            <person name="Searle S."/>
            <person name="Zhou Y."/>
            <person name="Kokocinski F."/>
            <person name="McDonald L."/>
            <person name="Evans R."/>
            <person name="Phillips K."/>
            <person name="Atkinson A."/>
            <person name="Cooper R."/>
            <person name="Jones C."/>
            <person name="Hall R.E."/>
            <person name="Andrews T.D."/>
            <person name="Lloyd C."/>
            <person name="Ainscough R."/>
            <person name="Almeida J.P."/>
            <person name="Ambrose K.D."/>
            <person name="Anderson F."/>
            <person name="Andrew R.W."/>
            <person name="Ashwell R.I.S."/>
            <person name="Aubin K."/>
            <person name="Babbage A.K."/>
            <person name="Bagguley C.L."/>
            <person name="Bailey J."/>
            <person name="Beasley H."/>
            <person name="Bethel G."/>
            <person name="Bird C.P."/>
            <person name="Bray-Allen S."/>
            <person name="Brown J.Y."/>
            <person name="Brown A.J."/>
            <person name="Buckley D."/>
            <person name="Burton J."/>
            <person name="Bye J."/>
            <person name="Carder C."/>
            <person name="Chapman J.C."/>
            <person name="Clark S.Y."/>
            <person name="Clarke G."/>
            <person name="Clee C."/>
            <person name="Cobley V."/>
            <person name="Collier R.E."/>
            <person name="Corby N."/>
            <person name="Coville G.J."/>
            <person name="Davies J."/>
            <person name="Deadman R."/>
            <person name="Dunn M."/>
            <person name="Earthrowl M."/>
            <person name="Ellington A.G."/>
            <person name="Errington H."/>
            <person name="Frankish A."/>
            <person name="Frankland J."/>
            <person name="French L."/>
            <person name="Garner P."/>
            <person name="Garnett J."/>
            <person name="Gay L."/>
            <person name="Ghori M.R.J."/>
            <person name="Gibson R."/>
            <person name="Gilby L.M."/>
            <person name="Gillett W."/>
            <person name="Glithero R.J."/>
            <person name="Grafham D.V."/>
            <person name="Griffiths C."/>
            <person name="Griffiths-Jones S."/>
            <person name="Grocock R."/>
            <person name="Hammond S."/>
            <person name="Harrison E.S.I."/>
            <person name="Hart E."/>
            <person name="Haugen E."/>
            <person name="Heath P.D."/>
            <person name="Holmes S."/>
            <person name="Holt K."/>
            <person name="Howden P.J."/>
            <person name="Hunt A.R."/>
            <person name="Hunt S.E."/>
            <person name="Hunter G."/>
            <person name="Isherwood J."/>
            <person name="James R."/>
            <person name="Johnson C."/>
            <person name="Johnson D."/>
            <person name="Joy A."/>
            <person name="Kay M."/>
            <person name="Kershaw J.K."/>
            <person name="Kibukawa M."/>
            <person name="Kimberley A.M."/>
            <person name="King A."/>
            <person name="Knights A.J."/>
            <person name="Lad H."/>
            <person name="Laird G."/>
            <person name="Lawlor S."/>
            <person name="Leongamornlert D.A."/>
            <person name="Lloyd D.M."/>
            <person name="Loveland J."/>
            <person name="Lovell J."/>
            <person name="Lush M.J."/>
            <person name="Lyne R."/>
            <person name="Martin S."/>
            <person name="Mashreghi-Mohammadi M."/>
            <person name="Matthews L."/>
            <person name="Matthews N.S.W."/>
            <person name="McLaren S."/>
            <person name="Milne S."/>
            <person name="Mistry S."/>
            <person name="Moore M.J.F."/>
            <person name="Nickerson T."/>
            <person name="O'Dell C.N."/>
            <person name="Oliver K."/>
            <person name="Palmeiri A."/>
            <person name="Palmer S.A."/>
            <person name="Parker A."/>
            <person name="Patel D."/>
            <person name="Pearce A.V."/>
            <person name="Peck A.I."/>
            <person name="Pelan S."/>
            <person name="Phelps K."/>
            <person name="Phillimore B.J."/>
            <person name="Plumb R."/>
            <person name="Rajan J."/>
            <person name="Raymond C."/>
            <person name="Rouse G."/>
            <person name="Saenphimmachak C."/>
            <person name="Sehra H.K."/>
            <person name="Sheridan E."/>
            <person name="Shownkeen R."/>
            <person name="Sims S."/>
            <person name="Skuce C.D."/>
            <person name="Smith M."/>
            <person name="Steward C."/>
            <person name="Subramanian S."/>
            <person name="Sycamore N."/>
            <person name="Tracey A."/>
            <person name="Tromans A."/>
            <person name="Van Helmond Z."/>
            <person name="Wall M."/>
            <person name="Wallis J.M."/>
            <person name="White S."/>
            <person name="Whitehead S.L."/>
            <person name="Wilkinson J.E."/>
            <person name="Willey D.L."/>
            <person name="Williams H."/>
            <person name="Wilming L."/>
            <person name="Wray P.W."/>
            <person name="Wu Z."/>
            <person name="Coulson A."/>
            <person name="Vaudin M."/>
            <person name="Sulston J.E."/>
            <person name="Durbin R.M."/>
            <person name="Hubbard T."/>
            <person name="Wooster R."/>
            <person name="Dunham I."/>
            <person name="Carter N.P."/>
            <person name="McVean G."/>
            <person name="Ross M.T."/>
            <person name="Harrow J."/>
            <person name="Olson M.V."/>
            <person name="Beck S."/>
            <person name="Rogers J."/>
            <person name="Bentley D.R."/>
        </authorList>
    </citation>
    <scope>NUCLEOTIDE SEQUENCE [LARGE SCALE GENOMIC DNA]</scope>
</reference>
<reference key="2">
    <citation type="journal article" date="2004" name="Genome Res.">
        <title>The status, quality, and expansion of the NIH full-length cDNA project: the Mammalian Gene Collection (MGC).</title>
        <authorList>
            <consortium name="The MGC Project Team"/>
        </authorList>
    </citation>
    <scope>NUCLEOTIDE SEQUENCE [LARGE SCALE MRNA]</scope>
    <source>
        <tissue>Colon</tissue>
    </source>
</reference>
<organism>
    <name type="scientific">Homo sapiens</name>
    <name type="common">Human</name>
    <dbReference type="NCBI Taxonomy" id="9606"/>
    <lineage>
        <taxon>Eukaryota</taxon>
        <taxon>Metazoa</taxon>
        <taxon>Chordata</taxon>
        <taxon>Craniata</taxon>
        <taxon>Vertebrata</taxon>
        <taxon>Euteleostomi</taxon>
        <taxon>Mammalia</taxon>
        <taxon>Eutheria</taxon>
        <taxon>Euarchontoglires</taxon>
        <taxon>Primates</taxon>
        <taxon>Haplorrhini</taxon>
        <taxon>Catarrhini</taxon>
        <taxon>Hominidae</taxon>
        <taxon>Homo</taxon>
    </lineage>
</organism>
<keyword id="KW-0472">Membrane</keyword>
<keyword id="KW-1267">Proteomics identification</keyword>
<keyword id="KW-1185">Reference proteome</keyword>
<keyword id="KW-0812">Transmembrane</keyword>
<keyword id="KW-1133">Transmembrane helix</keyword>
<dbReference type="EMBL" id="AL590440">
    <property type="status" value="NOT_ANNOTATED_CDS"/>
    <property type="molecule type" value="Genomic_DNA"/>
</dbReference>
<dbReference type="EMBL" id="BC029775">
    <property type="protein sequence ID" value="AAH29775.1"/>
    <property type="molecule type" value="mRNA"/>
</dbReference>
<dbReference type="CCDS" id="CCDS601.1"/>
<dbReference type="RefSeq" id="NP_872338.1">
    <property type="nucleotide sequence ID" value="NM_182532.3"/>
</dbReference>
<dbReference type="RefSeq" id="XP_011539213.1">
    <property type="nucleotide sequence ID" value="XM_011540911.3"/>
</dbReference>
<dbReference type="RefSeq" id="XP_054190875.1">
    <property type="nucleotide sequence ID" value="XM_054334900.1"/>
</dbReference>
<dbReference type="BioGRID" id="128286">
    <property type="interactions" value="1"/>
</dbReference>
<dbReference type="FunCoup" id="Q8N0U2">
    <property type="interactions" value="5"/>
</dbReference>
<dbReference type="IntAct" id="Q8N0U2">
    <property type="interactions" value="17"/>
</dbReference>
<dbReference type="STRING" id="9606.ENSP00000360315"/>
<dbReference type="GlyGen" id="Q8N0U2">
    <property type="glycosylation" value="1 site"/>
</dbReference>
<dbReference type="BioMuta" id="TMEM61"/>
<dbReference type="DMDM" id="74750872"/>
<dbReference type="MassIVE" id="Q8N0U2"/>
<dbReference type="PaxDb" id="9606-ENSP00000360315"/>
<dbReference type="PeptideAtlas" id="Q8N0U2"/>
<dbReference type="Antibodypedia" id="33228">
    <property type="antibodies" value="39 antibodies from 14 providers"/>
</dbReference>
<dbReference type="DNASU" id="199964"/>
<dbReference type="Ensembl" id="ENST00000371268.4">
    <property type="protein sequence ID" value="ENSP00000360315.3"/>
    <property type="gene ID" value="ENSG00000143001.7"/>
</dbReference>
<dbReference type="Ensembl" id="ENST00000715913.1">
    <property type="protein sequence ID" value="ENSP00000520542.1"/>
    <property type="gene ID" value="ENSG00000143001.7"/>
</dbReference>
<dbReference type="GeneID" id="199964"/>
<dbReference type="KEGG" id="hsa:199964"/>
<dbReference type="MANE-Select" id="ENST00000371268.4">
    <property type="protein sequence ID" value="ENSP00000360315.3"/>
    <property type="RefSeq nucleotide sequence ID" value="NM_182532.3"/>
    <property type="RefSeq protein sequence ID" value="NP_872338.1"/>
</dbReference>
<dbReference type="UCSC" id="uc001cyd.3">
    <property type="organism name" value="human"/>
</dbReference>
<dbReference type="AGR" id="HGNC:27296"/>
<dbReference type="CTD" id="199964"/>
<dbReference type="GeneCards" id="TMEM61"/>
<dbReference type="HGNC" id="HGNC:27296">
    <property type="gene designation" value="TMEM61"/>
</dbReference>
<dbReference type="HPA" id="ENSG00000143001">
    <property type="expression patterns" value="Tissue enhanced (kidney, pituitary gland, salivary gland)"/>
</dbReference>
<dbReference type="neXtProt" id="NX_Q8N0U2"/>
<dbReference type="OpenTargets" id="ENSG00000143001"/>
<dbReference type="PharmGKB" id="PA142670774"/>
<dbReference type="VEuPathDB" id="HostDB:ENSG00000143001"/>
<dbReference type="eggNOG" id="ENOG502SNNX">
    <property type="taxonomic scope" value="Eukaryota"/>
</dbReference>
<dbReference type="GeneTree" id="ENSGT00390000007464"/>
<dbReference type="HOGENOM" id="CLU_095363_0_0_1"/>
<dbReference type="InParanoid" id="Q8N0U2"/>
<dbReference type="OMA" id="FRYGMTI"/>
<dbReference type="OrthoDB" id="9901365at2759"/>
<dbReference type="PAN-GO" id="Q8N0U2">
    <property type="GO annotations" value="0 GO annotations based on evolutionary models"/>
</dbReference>
<dbReference type="PhylomeDB" id="Q8N0U2"/>
<dbReference type="TreeFam" id="TF336350"/>
<dbReference type="PathwayCommons" id="Q8N0U2"/>
<dbReference type="SignaLink" id="Q8N0U2"/>
<dbReference type="BioGRID-ORCS" id="199964">
    <property type="hits" value="14 hits in 1140 CRISPR screens"/>
</dbReference>
<dbReference type="GenomeRNAi" id="199964"/>
<dbReference type="Pharos" id="Q8N0U2">
    <property type="development level" value="Tdark"/>
</dbReference>
<dbReference type="PRO" id="PR:Q8N0U2"/>
<dbReference type="Proteomes" id="UP000005640">
    <property type="component" value="Chromosome 1"/>
</dbReference>
<dbReference type="RNAct" id="Q8N0U2">
    <property type="molecule type" value="protein"/>
</dbReference>
<dbReference type="Bgee" id="ENSG00000143001">
    <property type="expression patterns" value="Expressed in parotid gland and 108 other cell types or tissues"/>
</dbReference>
<dbReference type="GO" id="GO:0016020">
    <property type="term" value="C:membrane"/>
    <property type="evidence" value="ECO:0007669"/>
    <property type="project" value="UniProtKB-SubCell"/>
</dbReference>
<dbReference type="InterPro" id="IPR028164">
    <property type="entry name" value="TMEM61"/>
</dbReference>
<dbReference type="PANTHER" id="PTHR37151">
    <property type="entry name" value="TRANSMEMBRANE PROTEIN 61"/>
    <property type="match status" value="1"/>
</dbReference>
<dbReference type="PANTHER" id="PTHR37151:SF1">
    <property type="entry name" value="TRANSMEMBRANE PROTEIN 61"/>
    <property type="match status" value="1"/>
</dbReference>
<dbReference type="Pfam" id="PF15105">
    <property type="entry name" value="TMEM61"/>
    <property type="match status" value="1"/>
</dbReference>
<accession>Q8N0U2</accession>
<comment type="interaction">
    <interactant intactId="EBI-25830583">
        <id>Q8N0U2</id>
    </interactant>
    <interactant intactId="EBI-491169">
        <id>P07550</id>
        <label>ADRB2</label>
    </interactant>
    <organismsDiffer>false</organismsDiffer>
    <experiments>3</experiments>
</comment>
<comment type="interaction">
    <interactant intactId="EBI-25830583">
        <id>Q8N0U2</id>
    </interactant>
    <interactant intactId="EBI-10976677">
        <id>G5E9A7</id>
        <label>DMWD</label>
    </interactant>
    <organismsDiffer>false</organismsDiffer>
    <experiments>3</experiments>
</comment>
<comment type="interaction">
    <interactant intactId="EBI-25830583">
        <id>Q8N0U2</id>
    </interactant>
    <interactant intactId="EBI-348399">
        <id>P22607</id>
        <label>FGFR3</label>
    </interactant>
    <organismsDiffer>false</organismsDiffer>
    <experiments>3</experiments>
</comment>
<comment type="interaction">
    <interactant intactId="EBI-25830583">
        <id>Q8N0U2</id>
    </interactant>
    <interactant intactId="EBI-10226858">
        <id>Q0VDC6</id>
        <label>FKBP1A</label>
    </interactant>
    <organismsDiffer>false</organismsDiffer>
    <experiments>3</experiments>
</comment>
<comment type="interaction">
    <interactant intactId="EBI-25830583">
        <id>Q8N0U2</id>
    </interactant>
    <interactant intactId="EBI-8285963">
        <id>Q14957</id>
        <label>GRIN2C</label>
    </interactant>
    <organismsDiffer>false</organismsDiffer>
    <experiments>3</experiments>
</comment>
<comment type="interaction">
    <interactant intactId="EBI-25830583">
        <id>Q8N0U2</id>
    </interactant>
    <interactant intactId="EBI-747754">
        <id>P28799</id>
        <label>GRN</label>
    </interactant>
    <organismsDiffer>false</organismsDiffer>
    <experiments>3</experiments>
</comment>
<comment type="interaction">
    <interactant intactId="EBI-25830583">
        <id>Q8N0U2</id>
    </interactant>
    <interactant intactId="EBI-351506">
        <id>P06396</id>
        <label>GSN</label>
    </interactant>
    <organismsDiffer>false</organismsDiffer>
    <experiments>3</experiments>
</comment>
<comment type="interaction">
    <interactant intactId="EBI-25830583">
        <id>Q8N0U2</id>
    </interactant>
    <interactant intactId="EBI-356991">
        <id>P54652</id>
        <label>HSPA2</label>
    </interactant>
    <organismsDiffer>false</organismsDiffer>
    <experiments>3</experiments>
</comment>
<comment type="interaction">
    <interactant intactId="EBI-25830583">
        <id>Q8N0U2</id>
    </interactant>
    <interactant intactId="EBI-10975473">
        <id>O60333-2</id>
        <label>KIF1B</label>
    </interactant>
    <organismsDiffer>false</organismsDiffer>
    <experiments>3</experiments>
</comment>
<comment type="interaction">
    <interactant intactId="EBI-25830583">
        <id>Q8N0U2</id>
    </interactant>
    <interactant intactId="EBI-50433196">
        <id>A0A6Q8PF08</id>
        <label>PMP22</label>
    </interactant>
    <organismsDiffer>false</organismsDiffer>
    <experiments>3</experiments>
</comment>
<comment type="interaction">
    <interactant intactId="EBI-25830583">
        <id>Q8N0U2</id>
    </interactant>
    <interactant intactId="EBI-396669">
        <id>Q9Y3C5</id>
        <label>RNF11</label>
    </interactant>
    <organismsDiffer>false</organismsDiffer>
    <experiments>3</experiments>
</comment>
<comment type="interaction">
    <interactant intactId="EBI-25830583">
        <id>Q8N0U2</id>
    </interactant>
    <interactant intactId="EBI-1053431">
        <id>P49591</id>
        <label>SARS1</label>
    </interactant>
    <organismsDiffer>false</organismsDiffer>
    <experiments>3</experiments>
</comment>
<comment type="interaction">
    <interactant intactId="EBI-25830583">
        <id>Q8N0U2</id>
    </interactant>
    <interactant intactId="EBI-5235340">
        <id>Q7Z699</id>
        <label>SPRED1</label>
    </interactant>
    <organismsDiffer>false</organismsDiffer>
    <experiments>3</experiments>
</comment>
<comment type="interaction">
    <interactant intactId="EBI-25830583">
        <id>Q8N0U2</id>
    </interactant>
    <interactant intactId="EBI-12806590">
        <id>Q86WV8</id>
        <label>TSC1</label>
    </interactant>
    <organismsDiffer>false</organismsDiffer>
    <experiments>3</experiments>
</comment>
<comment type="interaction">
    <interactant intactId="EBI-25830583">
        <id>Q8N0U2</id>
    </interactant>
    <interactant intactId="EBI-741480">
        <id>Q9UMX0</id>
        <label>UBQLN1</label>
    </interactant>
    <organismsDiffer>false</organismsDiffer>
    <experiments>3</experiments>
</comment>
<comment type="interaction">
    <interactant intactId="EBI-25830583">
        <id>Q8N0U2</id>
    </interactant>
    <interactant intactId="EBI-720609">
        <id>O76024</id>
        <label>WFS1</label>
    </interactant>
    <organismsDiffer>false</organismsDiffer>
    <experiments>3</experiments>
</comment>
<comment type="subcellular location">
    <subcellularLocation>
        <location evidence="3">Membrane</location>
        <topology evidence="3">Multi-pass membrane protein</topology>
    </subcellularLocation>
</comment>
<proteinExistence type="evidence at protein level"/>